<comment type="function">
    <text evidence="2">Multifunctional protein which displays endonuclease and helicase activities required for initiating and directing viral DNA replication. Also plays a role in viral packaging and transactivation of several promoters. Binds site-specifically to 2-3 approximate tandem copies within the origins of replication (Ori), unwinds this hairpin region and nicks one DNA strand thereby initiating the rolling circle replication (RCR). Becomes covalently attached to the 5' end of the nick and provides a 3'OH for priming DNA synthesis. The helicase activity unwinds DNA in a 3'-5' direction on the longer strand. Participates in the transcriptional regulation of several promoters.</text>
</comment>
<comment type="catalytic activity">
    <reaction evidence="2">
        <text>ATP + H2O = ADP + phosphate + H(+)</text>
        <dbReference type="Rhea" id="RHEA:13065"/>
        <dbReference type="ChEBI" id="CHEBI:15377"/>
        <dbReference type="ChEBI" id="CHEBI:15378"/>
        <dbReference type="ChEBI" id="CHEBI:30616"/>
        <dbReference type="ChEBI" id="CHEBI:43474"/>
        <dbReference type="ChEBI" id="CHEBI:456216"/>
        <dbReference type="EC" id="3.6.4.12"/>
    </reaction>
</comment>
<comment type="cofactor">
    <cofactor evidence="2">
        <name>Mg(2+)</name>
        <dbReference type="ChEBI" id="CHEBI:18420"/>
    </cofactor>
    <text evidence="2">The endonuclease active site can probably bind other divalent cations.</text>
</comment>
<comment type="subunit">
    <text evidence="3">Homooligomer; when bound to DNA.</text>
</comment>
<comment type="subcellular location">
    <subcellularLocation>
        <location evidence="1">Host nucleus</location>
    </subcellularLocation>
</comment>
<comment type="alternative products">
    <event type="alternative splicing"/>
    <isoform>
        <id>C5IY48-1</id>
        <name>NS1</name>
        <sequence type="displayed"/>
    </isoform>
    <isoform>
        <id>C5IY48-2</id>
        <name>NS1-70</name>
        <sequence type="described" ref="VSP_059930 VSP_059931"/>
    </isoform>
</comment>
<comment type="domain">
    <text evidence="3">In the N-terminus, the endonuclease region is involved in binding to the origin of replication. In the middle, there are the ATPase and helicase activities. The C-terminus probably contains a transactivation domain.</text>
</comment>
<comment type="similarity">
    <text evidence="7">Belongs to the parvoviruses initiator protein NS1 family.</text>
</comment>
<reference key="1">
    <citation type="journal article" date="2009" name="PLoS Pathog.">
        <title>A Novel Bocavirus Associated with Acute Gastroenteritis in Australian Children.</title>
        <authorList>
            <person name="Arthur J.L."/>
            <person name="Higgins G.D."/>
            <person name="Davidson G.P."/>
            <person name="Givney R.C."/>
            <person name="Ratcliff R.M."/>
        </authorList>
    </citation>
    <scope>NUCLEOTIDE SEQUENCE [GENOMIC DNA] (ISOFORM NS1-70)</scope>
    <source>
        <strain>W471</strain>
    </source>
</reference>
<reference key="2">
    <citation type="journal article" date="2010" name="J. Infect. Dis.">
        <title>Human bocaviruses are highly diverse, dispersed, recombination prone, and prevalent in enteric infections.</title>
        <authorList>
            <person name="Kapoor A."/>
            <person name="Simmonds P."/>
            <person name="Slikas E."/>
            <person name="Li L."/>
            <person name="Bodhidatta L."/>
            <person name="Sethabutr O."/>
            <person name="Triki H."/>
            <person name="Bahri O."/>
            <person name="Oderinde B.S."/>
            <person name="Baba M.M."/>
            <person name="Bukbuk D.N."/>
            <person name="Besser J."/>
            <person name="Bartkus J."/>
            <person name="Delwart E."/>
        </authorList>
    </citation>
    <scope>NUCLEOTIDE SEQUENCE [GENOMIC DNA] (ISOFORM NS1)</scope>
    <source>
        <strain evidence="8">HBoV3B-TU-A-210-07</strain>
    </source>
</reference>
<keyword id="KW-0025">Alternative splicing</keyword>
<keyword id="KW-0067">ATP-binding</keyword>
<keyword id="KW-0175">Coiled coil</keyword>
<keyword id="KW-0190">Covalent protein-DNA linkage</keyword>
<keyword id="KW-0235">DNA replication</keyword>
<keyword id="KW-0238">DNA-binding</keyword>
<keyword id="KW-0255">Endonuclease</keyword>
<keyword id="KW-0347">Helicase</keyword>
<keyword id="KW-1048">Host nucleus</keyword>
<keyword id="KW-0378">Hydrolase</keyword>
<keyword id="KW-0460">Magnesium</keyword>
<keyword id="KW-0479">Metal-binding</keyword>
<keyword id="KW-0511">Multifunctional enzyme</keyword>
<keyword id="KW-0540">Nuclease</keyword>
<keyword id="KW-0547">Nucleotide-binding</keyword>
<keyword id="KW-0804">Transcription</keyword>
<keyword id="KW-0805">Transcription regulation</keyword>
<keyword id="KW-1194">Viral DNA replication</keyword>
<name>NS1_HBOC3</name>
<organismHost>
    <name type="scientific">Homo sapiens</name>
    <name type="common">Human</name>
    <dbReference type="NCBI Taxonomy" id="9606"/>
</organismHost>
<proteinExistence type="inferred from homology"/>
<accession>C5IY48</accession>
<accession>C1IWT0</accession>
<evidence type="ECO:0000250" key="1">
    <source>
        <dbReference type="UniProtKB" id="D0EZM8"/>
    </source>
</evidence>
<evidence type="ECO:0000250" key="2">
    <source>
        <dbReference type="UniProtKB" id="P03134"/>
    </source>
</evidence>
<evidence type="ECO:0000250" key="3">
    <source>
        <dbReference type="UniProtKB" id="Q9PZT1"/>
    </source>
</evidence>
<evidence type="ECO:0000255" key="4">
    <source>
        <dbReference type="PROSITE-ProRule" id="PRU00551"/>
    </source>
</evidence>
<evidence type="ECO:0000255" key="5">
    <source>
        <dbReference type="PROSITE-ProRule" id="PRU01366"/>
    </source>
</evidence>
<evidence type="ECO:0000256" key="6">
    <source>
        <dbReference type="SAM" id="MobiDB-lite"/>
    </source>
</evidence>
<evidence type="ECO:0000305" key="7"/>
<evidence type="ECO:0000312" key="8">
    <source>
        <dbReference type="EMBL" id="ACR15784.1"/>
    </source>
</evidence>
<feature type="chain" id="PRO_0000445635" description="Initiator protein NS1">
    <location>
        <begin position="1"/>
        <end position="780"/>
    </location>
</feature>
<feature type="domain" description="PV NS1-Nuc" evidence="5">
    <location>
        <begin position="11"/>
        <end position="271"/>
    </location>
</feature>
<feature type="domain" description="SF3 helicase" evidence="4">
    <location>
        <begin position="397"/>
        <end position="552"/>
    </location>
</feature>
<feature type="region of interest" description="Ori-binding" evidence="2">
    <location>
        <begin position="193"/>
        <end position="197"/>
    </location>
</feature>
<feature type="region of interest" description="Transactivation" evidence="2">
    <location>
        <begin position="606"/>
        <end position="780"/>
    </location>
</feature>
<feature type="region of interest" description="Disordered" evidence="6">
    <location>
        <begin position="627"/>
        <end position="681"/>
    </location>
</feature>
<feature type="region of interest" description="Disordered" evidence="6">
    <location>
        <begin position="696"/>
        <end position="780"/>
    </location>
</feature>
<feature type="short sequence motif" description="RCR-2" evidence="5">
    <location>
        <begin position="115"/>
        <end position="117"/>
    </location>
</feature>
<feature type="short sequence motif" description="RCR-3" evidence="5">
    <location>
        <begin position="211"/>
        <end position="215"/>
    </location>
</feature>
<feature type="compositionally biased region" description="Acidic residues" evidence="6">
    <location>
        <begin position="639"/>
        <end position="652"/>
    </location>
</feature>
<feature type="compositionally biased region" description="Basic and acidic residues" evidence="6">
    <location>
        <begin position="700"/>
        <end position="721"/>
    </location>
</feature>
<feature type="compositionally biased region" description="Polar residues" evidence="6">
    <location>
        <begin position="723"/>
        <end position="738"/>
    </location>
</feature>
<feature type="active site" description="For nuclease activity" evidence="5">
    <location>
        <position position="211"/>
    </location>
</feature>
<feature type="binding site" evidence="5">
    <location>
        <position position="108"/>
    </location>
    <ligand>
        <name>a divalent metal cation</name>
        <dbReference type="ChEBI" id="CHEBI:60240"/>
    </ligand>
</feature>
<feature type="binding site" evidence="5">
    <location>
        <position position="115"/>
    </location>
    <ligand>
        <name>a divalent metal cation</name>
        <dbReference type="ChEBI" id="CHEBI:60240"/>
    </ligand>
</feature>
<feature type="binding site" evidence="5">
    <location>
        <position position="117"/>
    </location>
    <ligand>
        <name>a divalent metal cation</name>
        <dbReference type="ChEBI" id="CHEBI:60240"/>
    </ligand>
</feature>
<feature type="binding site" evidence="4">
    <location>
        <begin position="423"/>
        <end position="430"/>
    </location>
    <ligand>
        <name>ATP</name>
        <dbReference type="ChEBI" id="CHEBI:30616"/>
    </ligand>
</feature>
<feature type="splice variant" id="VSP_059930" description="In isoform NS1-70.">
    <original>DLGDTDGEDSESEASEVGVRPSK</original>
    <variation>KFTFSKHFIYILYTTLKHMFNYR</variation>
    <location>
        <begin position="639"/>
        <end position="661"/>
    </location>
</feature>
<feature type="splice variant" id="VSP_059931" description="In isoform NS1-70.">
    <location>
        <begin position="662"/>
        <end position="780"/>
    </location>
</feature>
<gene>
    <name type="primary">NS1</name>
</gene>
<protein>
    <recommendedName>
        <fullName evidence="2">Initiator protein NS1</fullName>
        <shortName>NS1</shortName>
        <ecNumber evidence="3">3.1.21.-</ecNumber>
        <ecNumber evidence="3">3.6.4.12</ecNumber>
    </recommendedName>
    <alternativeName>
        <fullName>Non-structural protein 1</fullName>
    </alternativeName>
    <alternativeName>
        <fullName>Non-structural protein NS1</fullName>
    </alternativeName>
</protein>
<organism>
    <name type="scientific">Human bocavirus 3</name>
    <name type="common">HBoV3</name>
    <name type="synonym">Adelavirus W471</name>
    <dbReference type="NCBI Taxonomy" id="638313"/>
    <lineage>
        <taxon>Viruses</taxon>
        <taxon>Monodnaviria</taxon>
        <taxon>Shotokuvirae</taxon>
        <taxon>Cossaviricota</taxon>
        <taxon>Quintoviricetes</taxon>
        <taxon>Piccovirales</taxon>
        <taxon>Parvoviridae</taxon>
        <taxon>Parvovirinae</taxon>
        <taxon>Bocaparvovirus</taxon>
        <taxon>Bocaparvovirus primate1</taxon>
    </lineage>
</organism>
<dbReference type="EC" id="3.1.21.-" evidence="3"/>
<dbReference type="EC" id="3.6.4.12" evidence="3"/>
<dbReference type="EMBL" id="FJ973562">
    <property type="protein sequence ID" value="ACR15784.1"/>
    <property type="molecule type" value="Genomic_DNA"/>
</dbReference>
<dbReference type="EMBL" id="EU918736">
    <property type="protein sequence ID" value="ACH81927.1"/>
    <property type="molecule type" value="Genomic_DNA"/>
</dbReference>
<dbReference type="RefSeq" id="YP_002808454.1">
    <molecule id="C5IY48-2"/>
    <property type="nucleotide sequence ID" value="NC_012564.1"/>
</dbReference>
<dbReference type="SMR" id="C5IY48"/>
<dbReference type="KEGG" id="vg:7768240"/>
<dbReference type="OrthoDB" id="2007at10239"/>
<dbReference type="Proteomes" id="UP000128541">
    <property type="component" value="Genome"/>
</dbReference>
<dbReference type="Proteomes" id="UP000143135">
    <property type="component" value="Genome"/>
</dbReference>
<dbReference type="GO" id="GO:0042025">
    <property type="term" value="C:host cell nucleus"/>
    <property type="evidence" value="ECO:0007669"/>
    <property type="project" value="UniProtKB-SubCell"/>
</dbReference>
<dbReference type="GO" id="GO:0005524">
    <property type="term" value="F:ATP binding"/>
    <property type="evidence" value="ECO:0007669"/>
    <property type="project" value="UniProtKB-KW"/>
</dbReference>
<dbReference type="GO" id="GO:0016887">
    <property type="term" value="F:ATP hydrolysis activity"/>
    <property type="evidence" value="ECO:0007669"/>
    <property type="project" value="RHEA"/>
</dbReference>
<dbReference type="GO" id="GO:0003677">
    <property type="term" value="F:DNA binding"/>
    <property type="evidence" value="ECO:0007669"/>
    <property type="project" value="UniProtKB-KW"/>
</dbReference>
<dbReference type="GO" id="GO:0004519">
    <property type="term" value="F:endonuclease activity"/>
    <property type="evidence" value="ECO:0007669"/>
    <property type="project" value="UniProtKB-KW"/>
</dbReference>
<dbReference type="GO" id="GO:0004386">
    <property type="term" value="F:helicase activity"/>
    <property type="evidence" value="ECO:0007669"/>
    <property type="project" value="UniProtKB-KW"/>
</dbReference>
<dbReference type="GO" id="GO:0046872">
    <property type="term" value="F:metal ion binding"/>
    <property type="evidence" value="ECO:0007669"/>
    <property type="project" value="UniProtKB-KW"/>
</dbReference>
<dbReference type="GO" id="GO:0006260">
    <property type="term" value="P:DNA replication"/>
    <property type="evidence" value="ECO:0007669"/>
    <property type="project" value="UniProtKB-KW"/>
</dbReference>
<dbReference type="GO" id="GO:0039693">
    <property type="term" value="P:viral DNA genome replication"/>
    <property type="evidence" value="ECO:0007669"/>
    <property type="project" value="UniProtKB-KW"/>
</dbReference>
<dbReference type="Gene3D" id="3.40.1310.20">
    <property type="match status" value="1"/>
</dbReference>
<dbReference type="Gene3D" id="3.40.50.300">
    <property type="entry name" value="P-loop containing nucleotide triphosphate hydrolases"/>
    <property type="match status" value="1"/>
</dbReference>
<dbReference type="InterPro" id="IPR054766">
    <property type="entry name" value="BoV_NS1-like_N"/>
</dbReference>
<dbReference type="InterPro" id="IPR014015">
    <property type="entry name" value="Helicase_SF3_DNA-vir"/>
</dbReference>
<dbReference type="InterPro" id="IPR027417">
    <property type="entry name" value="P-loop_NTPase"/>
</dbReference>
<dbReference type="InterPro" id="IPR001257">
    <property type="entry name" value="Parvovirus_NS1_helicase"/>
</dbReference>
<dbReference type="InterPro" id="IPR049901">
    <property type="entry name" value="PV_NS1-NUC"/>
</dbReference>
<dbReference type="Pfam" id="PF22419">
    <property type="entry name" value="HBoV_NS1-like_N"/>
    <property type="match status" value="1"/>
</dbReference>
<dbReference type="Pfam" id="PF01057">
    <property type="entry name" value="Parvo_NS1"/>
    <property type="match status" value="1"/>
</dbReference>
<dbReference type="SUPFAM" id="SSF52540">
    <property type="entry name" value="P-loop containing nucleoside triphosphate hydrolases"/>
    <property type="match status" value="1"/>
</dbReference>
<dbReference type="PROSITE" id="PS52022">
    <property type="entry name" value="PV_NS1_NUC"/>
    <property type="match status" value="1"/>
</dbReference>
<dbReference type="PROSITE" id="PS51206">
    <property type="entry name" value="SF3_HELICASE_1"/>
    <property type="match status" value="1"/>
</dbReference>
<sequence length="780" mass="87867">MAFNPPVIRAFSSPAFTYVFKFPYPSWKEKEWLLHALLAHGTEQAMIQLRNCVPHPDEDIIRDDLLLSLEDRHFGAILCKAVYMATTTFMSQKQRNMFPRCDIIVQSELGETNLHCHIIVGGEGLSKRNAKTSCPQLYGLILGELIQRCKTLLATRPFEPEEAEIYHALKRAEREAWGGVTSGNLQILQYRDRRGDLHAQQVDALRFFKNYLLPKNRCITSYSRPDVCTSPENWFVLAEKTYCHTLVNGLPLPEHYRKHYHATLDNEVLPGPQTMAFGGRGPWEHLPEVGDQRLAASSVSTTYKPNKKEKLMLNLLDKCSELNLLVYEDLVANCPELLLMLEGQPGGARLIEQVLGMHHINVCSNFTALSYLFHLYPGTTLSSDNKALQLLLIQGYNPLMVGHALCCVLNKQFGKQNTVCFYGPASTGKTNMAKAIVQGIRLYGCVNHLNKGFVFNDCRQRLVVWWEECLMHQDWVEPAKCILGGTECRIDVKHRDSVLLTQTPVIISTNHDIYAVVGGNSVSHVHAAPLKERVIQLNFMKQLPQTFGEITPEEIAALLQWCFNEYECTLTGFKTKWSLDKIPNSFPLGVLCPTHSQDFILHENGYCTDCGGYLAHSADDSVYTDRASDTSKEAIDAGDLGDTDGEDSESEASEVGVRPSKKRRITIPATPPNSPGSSVSTSAFFDNWCAQPRDEDELREYERQASRLQKKRESRERREETPMATSSQESESEPNPTQWGDKLGVIPSGTPDQPPIVLHCFEDLRPSDEDEGEYIGKERL</sequence>